<proteinExistence type="inferred from homology"/>
<comment type="similarity">
    <text evidence="1">Belongs to the bacterial ribosomal protein bL34 family.</text>
</comment>
<sequence>MTKRTLGGTSRKRKRVSGFRVRMRSHTGRRVIRTRRKRGRTRLAV</sequence>
<organism>
    <name type="scientific">Synechococcus sp. (strain CC9902)</name>
    <dbReference type="NCBI Taxonomy" id="316279"/>
    <lineage>
        <taxon>Bacteria</taxon>
        <taxon>Bacillati</taxon>
        <taxon>Cyanobacteriota</taxon>
        <taxon>Cyanophyceae</taxon>
        <taxon>Synechococcales</taxon>
        <taxon>Synechococcaceae</taxon>
        <taxon>Synechococcus</taxon>
    </lineage>
</organism>
<evidence type="ECO:0000255" key="1">
    <source>
        <dbReference type="HAMAP-Rule" id="MF_00391"/>
    </source>
</evidence>
<evidence type="ECO:0000256" key="2">
    <source>
        <dbReference type="SAM" id="MobiDB-lite"/>
    </source>
</evidence>
<evidence type="ECO:0000305" key="3"/>
<gene>
    <name evidence="1" type="primary">rpmH</name>
    <name evidence="1" type="synonym">rpl34</name>
    <name type="ordered locus">Syncc9902_1784</name>
</gene>
<keyword id="KW-1185">Reference proteome</keyword>
<keyword id="KW-0687">Ribonucleoprotein</keyword>
<keyword id="KW-0689">Ribosomal protein</keyword>
<feature type="chain" id="PRO_1000013479" description="Large ribosomal subunit protein bL34">
    <location>
        <begin position="1"/>
        <end position="45"/>
    </location>
</feature>
<feature type="region of interest" description="Disordered" evidence="2">
    <location>
        <begin position="1"/>
        <end position="27"/>
    </location>
</feature>
<feature type="compositionally biased region" description="Basic residues" evidence="2">
    <location>
        <begin position="10"/>
        <end position="27"/>
    </location>
</feature>
<name>RL34_SYNS9</name>
<dbReference type="EMBL" id="CP000097">
    <property type="protein sequence ID" value="ABB26741.1"/>
    <property type="molecule type" value="Genomic_DNA"/>
</dbReference>
<dbReference type="RefSeq" id="WP_011360548.1">
    <property type="nucleotide sequence ID" value="NC_007513.1"/>
</dbReference>
<dbReference type="SMR" id="Q3AV42"/>
<dbReference type="STRING" id="316279.Syncc9902_1784"/>
<dbReference type="KEGG" id="sye:Syncc9902_1784"/>
<dbReference type="eggNOG" id="COG0230">
    <property type="taxonomic scope" value="Bacteria"/>
</dbReference>
<dbReference type="HOGENOM" id="CLU_129938_2_1_3"/>
<dbReference type="Proteomes" id="UP000002712">
    <property type="component" value="Chromosome"/>
</dbReference>
<dbReference type="GO" id="GO:1990904">
    <property type="term" value="C:ribonucleoprotein complex"/>
    <property type="evidence" value="ECO:0007669"/>
    <property type="project" value="UniProtKB-KW"/>
</dbReference>
<dbReference type="GO" id="GO:0005840">
    <property type="term" value="C:ribosome"/>
    <property type="evidence" value="ECO:0007669"/>
    <property type="project" value="UniProtKB-KW"/>
</dbReference>
<dbReference type="GO" id="GO:0003735">
    <property type="term" value="F:structural constituent of ribosome"/>
    <property type="evidence" value="ECO:0007669"/>
    <property type="project" value="InterPro"/>
</dbReference>
<dbReference type="GO" id="GO:0006412">
    <property type="term" value="P:translation"/>
    <property type="evidence" value="ECO:0007669"/>
    <property type="project" value="UniProtKB-UniRule"/>
</dbReference>
<dbReference type="Gene3D" id="1.10.287.3980">
    <property type="match status" value="1"/>
</dbReference>
<dbReference type="HAMAP" id="MF_00391">
    <property type="entry name" value="Ribosomal_bL34"/>
    <property type="match status" value="1"/>
</dbReference>
<dbReference type="InterPro" id="IPR000271">
    <property type="entry name" value="Ribosomal_bL34"/>
</dbReference>
<dbReference type="InterPro" id="IPR020939">
    <property type="entry name" value="Ribosomal_bL34_CS"/>
</dbReference>
<dbReference type="NCBIfam" id="TIGR01030">
    <property type="entry name" value="rpmH_bact"/>
    <property type="match status" value="1"/>
</dbReference>
<dbReference type="Pfam" id="PF00468">
    <property type="entry name" value="Ribosomal_L34"/>
    <property type="match status" value="1"/>
</dbReference>
<dbReference type="PROSITE" id="PS00784">
    <property type="entry name" value="RIBOSOMAL_L34"/>
    <property type="match status" value="1"/>
</dbReference>
<reference key="1">
    <citation type="submission" date="2005-08" db="EMBL/GenBank/DDBJ databases">
        <title>Complete sequence of Synechococcus sp. CC9902.</title>
        <authorList>
            <person name="Copeland A."/>
            <person name="Lucas S."/>
            <person name="Lapidus A."/>
            <person name="Barry K."/>
            <person name="Detter J.C."/>
            <person name="Glavina T."/>
            <person name="Hammon N."/>
            <person name="Israni S."/>
            <person name="Pitluck S."/>
            <person name="Martinez M."/>
            <person name="Schmutz J."/>
            <person name="Larimer F."/>
            <person name="Land M."/>
            <person name="Kyrpides N."/>
            <person name="Ivanova N."/>
            <person name="Richardson P."/>
        </authorList>
    </citation>
    <scope>NUCLEOTIDE SEQUENCE [LARGE SCALE GENOMIC DNA]</scope>
    <source>
        <strain>CC9902</strain>
    </source>
</reference>
<protein>
    <recommendedName>
        <fullName evidence="1">Large ribosomal subunit protein bL34</fullName>
    </recommendedName>
    <alternativeName>
        <fullName evidence="3">50S ribosomal protein L34</fullName>
    </alternativeName>
</protein>
<accession>Q3AV42</accession>